<protein>
    <recommendedName>
        <fullName evidence="1">Large ribosomal subunit protein bL34</fullName>
    </recommendedName>
    <alternativeName>
        <fullName evidence="3">50S ribosomal protein L34</fullName>
    </alternativeName>
</protein>
<evidence type="ECO:0000255" key="1">
    <source>
        <dbReference type="HAMAP-Rule" id="MF_00391"/>
    </source>
</evidence>
<evidence type="ECO:0000256" key="2">
    <source>
        <dbReference type="SAM" id="MobiDB-lite"/>
    </source>
</evidence>
<evidence type="ECO:0000305" key="3"/>
<organism>
    <name type="scientific">Streptococcus equi subsp. zooepidemicus (strain H70)</name>
    <dbReference type="NCBI Taxonomy" id="553483"/>
    <lineage>
        <taxon>Bacteria</taxon>
        <taxon>Bacillati</taxon>
        <taxon>Bacillota</taxon>
        <taxon>Bacilli</taxon>
        <taxon>Lactobacillales</taxon>
        <taxon>Streptococcaceae</taxon>
        <taxon>Streptococcus</taxon>
    </lineage>
</organism>
<reference key="1">
    <citation type="journal article" date="2009" name="PLoS Pathog.">
        <title>Genomic evidence for the evolution of Streptococcus equi: host restriction, increased virulence, and genetic exchange with human pathogens.</title>
        <authorList>
            <person name="Holden M.T.G."/>
            <person name="Heather Z."/>
            <person name="Paillot R."/>
            <person name="Steward K.F."/>
            <person name="Webb K."/>
            <person name="Ainslie F."/>
            <person name="Jourdan T."/>
            <person name="Bason N.C."/>
            <person name="Holroyd N.E."/>
            <person name="Mungall K."/>
            <person name="Quail M.A."/>
            <person name="Sanders M."/>
            <person name="Simmonds M."/>
            <person name="Willey D."/>
            <person name="Brooks K."/>
            <person name="Aanensen D.M."/>
            <person name="Spratt B.G."/>
            <person name="Jolley K.A."/>
            <person name="Maiden M.C.J."/>
            <person name="Kehoe M."/>
            <person name="Chanter N."/>
            <person name="Bentley S.D."/>
            <person name="Robinson C."/>
            <person name="Maskell D.J."/>
            <person name="Parkhill J."/>
            <person name="Waller A.S."/>
        </authorList>
    </citation>
    <scope>NUCLEOTIDE SEQUENCE [LARGE SCALE GENOMIC DNA]</scope>
    <source>
        <strain>H70</strain>
    </source>
</reference>
<gene>
    <name evidence="1" type="primary">rpmH</name>
    <name type="ordered locus">SZO_17130</name>
</gene>
<sequence>MKRTYQPSKIRRQRKHGFRHRMSTKNGRRVLASRRRKGRKVLSA</sequence>
<proteinExistence type="inferred from homology"/>
<name>RL34_STRS7</name>
<feature type="chain" id="PRO_1000205839" description="Large ribosomal subunit protein bL34">
    <location>
        <begin position="1"/>
        <end position="44"/>
    </location>
</feature>
<feature type="region of interest" description="Disordered" evidence="2">
    <location>
        <begin position="1"/>
        <end position="44"/>
    </location>
</feature>
<keyword id="KW-0687">Ribonucleoprotein</keyword>
<keyword id="KW-0689">Ribosomal protein</keyword>
<comment type="similarity">
    <text evidence="1">Belongs to the bacterial ribosomal protein bL34 family.</text>
</comment>
<accession>C0MF49</accession>
<dbReference type="EMBL" id="FM204884">
    <property type="protein sequence ID" value="CAX00528.1"/>
    <property type="molecule type" value="Genomic_DNA"/>
</dbReference>
<dbReference type="SMR" id="C0MF49"/>
<dbReference type="KEGG" id="seq:SZO_17130"/>
<dbReference type="eggNOG" id="COG0230">
    <property type="taxonomic scope" value="Bacteria"/>
</dbReference>
<dbReference type="HOGENOM" id="CLU_129938_2_0_9"/>
<dbReference type="Proteomes" id="UP000001368">
    <property type="component" value="Chromosome"/>
</dbReference>
<dbReference type="GO" id="GO:1990904">
    <property type="term" value="C:ribonucleoprotein complex"/>
    <property type="evidence" value="ECO:0007669"/>
    <property type="project" value="UniProtKB-KW"/>
</dbReference>
<dbReference type="GO" id="GO:0005840">
    <property type="term" value="C:ribosome"/>
    <property type="evidence" value="ECO:0007669"/>
    <property type="project" value="UniProtKB-KW"/>
</dbReference>
<dbReference type="GO" id="GO:0003735">
    <property type="term" value="F:structural constituent of ribosome"/>
    <property type="evidence" value="ECO:0007669"/>
    <property type="project" value="InterPro"/>
</dbReference>
<dbReference type="GO" id="GO:0006412">
    <property type="term" value="P:translation"/>
    <property type="evidence" value="ECO:0007669"/>
    <property type="project" value="UniProtKB-UniRule"/>
</dbReference>
<dbReference type="FunFam" id="1.10.287.3980:FF:000001">
    <property type="entry name" value="Mitochondrial ribosomal protein L34"/>
    <property type="match status" value="1"/>
</dbReference>
<dbReference type="Gene3D" id="1.10.287.3980">
    <property type="match status" value="1"/>
</dbReference>
<dbReference type="HAMAP" id="MF_00391">
    <property type="entry name" value="Ribosomal_bL34"/>
    <property type="match status" value="1"/>
</dbReference>
<dbReference type="InterPro" id="IPR000271">
    <property type="entry name" value="Ribosomal_bL34"/>
</dbReference>
<dbReference type="InterPro" id="IPR020939">
    <property type="entry name" value="Ribosomal_bL34_CS"/>
</dbReference>
<dbReference type="NCBIfam" id="TIGR01030">
    <property type="entry name" value="rpmH_bact"/>
    <property type="match status" value="1"/>
</dbReference>
<dbReference type="PANTHER" id="PTHR14503:SF4">
    <property type="entry name" value="LARGE RIBOSOMAL SUBUNIT PROTEIN BL34M"/>
    <property type="match status" value="1"/>
</dbReference>
<dbReference type="PANTHER" id="PTHR14503">
    <property type="entry name" value="MITOCHONDRIAL RIBOSOMAL PROTEIN 34 FAMILY MEMBER"/>
    <property type="match status" value="1"/>
</dbReference>
<dbReference type="Pfam" id="PF00468">
    <property type="entry name" value="Ribosomal_L34"/>
    <property type="match status" value="1"/>
</dbReference>
<dbReference type="PROSITE" id="PS00784">
    <property type="entry name" value="RIBOSOMAL_L34"/>
    <property type="match status" value="1"/>
</dbReference>